<reference key="1">
    <citation type="journal article" date="2002" name="Yeast">
        <title>Revisiting the yeast chromosome VI DNA sequence reveals a correction merging YFL007w and YFL006w to a single ORF.</title>
        <authorList>
            <person name="Robben J."/>
            <person name="Hertveldt K."/>
            <person name="Volckaert G."/>
        </authorList>
    </citation>
    <scope>NUCLEOTIDE SEQUENCE [GENOMIC DNA]</scope>
    <scope>IDENTIFICATION OF FRAMESHIFT</scope>
    <source>
        <strain>ATCC 201390 / BY4743</strain>
        <strain>ATCC 96604 / S288c / FY1679</strain>
    </source>
</reference>
<reference key="2">
    <citation type="journal article" date="2004" name="Yeast">
        <title>Expression of the expanded YFL007w ORF and assignment of the gene name BLM10.</title>
        <authorList>
            <person name="Doherty K."/>
            <person name="Pramanik A."/>
            <person name="Pride L."/>
            <person name="Lukose J."/>
            <person name="Moore C.W."/>
        </authorList>
    </citation>
    <scope>NUCLEOTIDE SEQUENCE [GENOMIC DNA]</scope>
    <scope>IDENTIFICATION OF FRAMESHIFT</scope>
    <source>
        <strain>CM1469-5C</strain>
    </source>
</reference>
<reference key="3">
    <citation type="journal article" date="1996" name="Yeast">
        <title>Sequencing of a 23 kb fragment from Saccharomyces cerevisiae chromosome VI.</title>
        <authorList>
            <person name="Naitou M."/>
            <person name="Ozawa M."/>
            <person name="Sasanuma S."/>
            <person name="Kobayashi M."/>
            <person name="Hagiwara H."/>
            <person name="Shibata T."/>
            <person name="Hanaoka F."/>
            <person name="Watanabe K."/>
            <person name="Ono A."/>
            <person name="Yamazaki M."/>
            <person name="Tashiro H."/>
            <person name="Eki T."/>
            <person name="Murakami Y."/>
        </authorList>
    </citation>
    <scope>NUCLEOTIDE SEQUENCE [GENOMIC DNA]</scope>
    <source>
        <strain>ATCC 204511 / S288c / AB972</strain>
    </source>
</reference>
<reference key="4">
    <citation type="journal article" date="1995" name="Nat. Genet.">
        <title>Analysis of the nucleotide sequence of chromosome VI from Saccharomyces cerevisiae.</title>
        <authorList>
            <person name="Murakami Y."/>
            <person name="Naitou M."/>
            <person name="Hagiwara H."/>
            <person name="Shibata T."/>
            <person name="Ozawa M."/>
            <person name="Sasanuma S."/>
            <person name="Sasanuma M."/>
            <person name="Tsuchiya Y."/>
            <person name="Soeda E."/>
            <person name="Yokoyama K."/>
            <person name="Yamazaki M."/>
            <person name="Tashiro H."/>
            <person name="Eki T."/>
        </authorList>
    </citation>
    <scope>NUCLEOTIDE SEQUENCE [LARGE SCALE GENOMIC DNA]</scope>
    <source>
        <strain>ATCC 204508 / S288c</strain>
    </source>
</reference>
<reference key="5">
    <citation type="journal article" date="2014" name="G3 (Bethesda)">
        <title>The reference genome sequence of Saccharomyces cerevisiae: Then and now.</title>
        <authorList>
            <person name="Engel S.R."/>
            <person name="Dietrich F.S."/>
            <person name="Fisk D.G."/>
            <person name="Binkley G."/>
            <person name="Balakrishnan R."/>
            <person name="Costanzo M.C."/>
            <person name="Dwight S.S."/>
            <person name="Hitz B.C."/>
            <person name="Karra K."/>
            <person name="Nash R.S."/>
            <person name="Weng S."/>
            <person name="Wong E.D."/>
            <person name="Lloyd P."/>
            <person name="Skrzypek M.S."/>
            <person name="Miyasato S.R."/>
            <person name="Simison M."/>
            <person name="Cherry J.M."/>
        </authorList>
    </citation>
    <scope>GENOME REANNOTATION</scope>
    <source>
        <strain>ATCC 204508 / S288c</strain>
    </source>
</reference>
<reference key="6">
    <citation type="journal article" date="2001" name="Cell. Mol. Biol.">
        <title>The novel BLM3 gene encodes a protein that protects against lethal effects of oxidative damage.</title>
        <authorList>
            <person name="Febres D.E."/>
            <person name="Pramanik A."/>
            <person name="Caton M."/>
            <person name="Doherty K."/>
            <person name="McKoy J."/>
            <person name="Garcia E."/>
            <person name="Alejo W."/>
            <person name="Moore C.W."/>
        </authorList>
    </citation>
    <scope>NUCLEOTIDE SEQUENCE [GENOMIC DNA] OF 1-1804</scope>
    <scope>FUNCTION</scope>
</reference>
<reference key="7">
    <citation type="journal article" date="2007" name="Genome Res.">
        <title>Approaching a complete repository of sequence-verified protein-encoding clones for Saccharomyces cerevisiae.</title>
        <authorList>
            <person name="Hu Y."/>
            <person name="Rolfs A."/>
            <person name="Bhullar B."/>
            <person name="Murthy T.V.S."/>
            <person name="Zhu C."/>
            <person name="Berger M.F."/>
            <person name="Camargo A.A."/>
            <person name="Kelley F."/>
            <person name="McCarron S."/>
            <person name="Jepson D."/>
            <person name="Richardson A."/>
            <person name="Raphael J."/>
            <person name="Moreira D."/>
            <person name="Taycher E."/>
            <person name="Zuo D."/>
            <person name="Mohr S."/>
            <person name="Kane M.F."/>
            <person name="Williamson J."/>
            <person name="Simpson A.J.G."/>
            <person name="Bulyk M.L."/>
            <person name="Harlow E."/>
            <person name="Marsischky G."/>
            <person name="Kolodner R.D."/>
            <person name="LaBaer J."/>
        </authorList>
    </citation>
    <scope>NUCLEOTIDE SEQUENCE [GENOMIC DNA] OF 1890-2143</scope>
    <source>
        <strain>ATCC 204508 / S288c</strain>
    </source>
</reference>
<reference key="8">
    <citation type="journal article" date="2005" name="Nat. Struct. Mol. Biol.">
        <title>The HEAT repeat protein Blm10 regulates the yeast proteasome by capping the core particle.</title>
        <authorList>
            <person name="Schmidt M."/>
            <person name="Haas W."/>
            <person name="Crosas B."/>
            <person name="Santamaria P.G."/>
            <person name="Gygi S.P."/>
            <person name="Walz T."/>
            <person name="Finley D."/>
        </authorList>
    </citation>
    <scope>PROTEIN SEQUENCE OF 340-346; 481-490; 813-830; 860-867; 950-958; 1039-1046; 1086-1102; 1164-1174; 1250-1271; 1513-1525; 1528-1548; 1562-1567; 1578-1585; 1601-1608; 1687-1706 AND 2123-2139</scope>
    <scope>FUNCTION</scope>
    <scope>SUBUNIT</scope>
    <scope>SUBCELLULAR LOCATION</scope>
    <scope>IDENTIFICATION BY MASS SPECTROMETRY</scope>
</reference>
<reference key="9">
    <citation type="journal article" date="2003" name="EMBO Rep.">
        <title>Blm3 is part of nascent proteasomes and is involved in a late stage of nuclear proteasome assembly.</title>
        <authorList>
            <person name="Fehlker M."/>
            <person name="Wendler P."/>
            <person name="Lehmann A."/>
            <person name="Enenkel C."/>
        </authorList>
    </citation>
    <scope>FUNCTION</scope>
    <scope>SUBUNIT</scope>
    <scope>SUBCELLULAR LOCATION</scope>
</reference>
<reference key="10">
    <citation type="journal article" date="2003" name="Nature">
        <title>Sequencing and comparison of yeast species to identify genes and regulatory elements.</title>
        <authorList>
            <person name="Kellis M."/>
            <person name="Patterson N."/>
            <person name="Endrizzi M."/>
            <person name="Birren B.W."/>
            <person name="Lander E.S."/>
        </authorList>
    </citation>
    <scope>IDENTIFICATION OF FRAMESHIFT</scope>
</reference>
<reference key="11">
    <citation type="journal article" date="2003" name="Nature">
        <title>Global analysis of protein localization in budding yeast.</title>
        <authorList>
            <person name="Huh W.-K."/>
            <person name="Falvo J.V."/>
            <person name="Gerke L.C."/>
            <person name="Carroll A.S."/>
            <person name="Howson R.W."/>
            <person name="Weissman J.S."/>
            <person name="O'Shea E.K."/>
        </authorList>
    </citation>
    <scope>SUBCELLULAR LOCATION [LARGE SCALE ANALYSIS]</scope>
</reference>
<reference key="12">
    <citation type="journal article" date="2003" name="Nature">
        <title>Global analysis of protein expression in yeast.</title>
        <authorList>
            <person name="Ghaemmaghami S."/>
            <person name="Huh W.-K."/>
            <person name="Bower K."/>
            <person name="Howson R.W."/>
            <person name="Belle A."/>
            <person name="Dephoure N."/>
            <person name="O'Shea E.K."/>
            <person name="Weissman J.S."/>
        </authorList>
    </citation>
    <scope>LEVEL OF PROTEIN EXPRESSION [LARGE SCALE ANALYSIS]</scope>
</reference>
<reference key="13">
    <citation type="journal article" date="2007" name="J. Proteome Res.">
        <title>Large-scale phosphorylation analysis of alpha-factor-arrested Saccharomyces cerevisiae.</title>
        <authorList>
            <person name="Li X."/>
            <person name="Gerber S.A."/>
            <person name="Rudner A.D."/>
            <person name="Beausoleil S.A."/>
            <person name="Haas W."/>
            <person name="Villen J."/>
            <person name="Elias J.E."/>
            <person name="Gygi S.P."/>
        </authorList>
    </citation>
    <scope>PHOSPHORYLATION [LARGE SCALE ANALYSIS] AT SER-56 AND SER-1041</scope>
    <scope>IDENTIFICATION BY MASS SPECTROMETRY [LARGE SCALE ANALYSIS]</scope>
    <source>
        <strain>ADR376</strain>
    </source>
</reference>
<reference key="14">
    <citation type="journal article" date="2007" name="Proc. Natl. Acad. Sci. U.S.A.">
        <title>Analysis of phosphorylation sites on proteins from Saccharomyces cerevisiae by electron transfer dissociation (ETD) mass spectrometry.</title>
        <authorList>
            <person name="Chi A."/>
            <person name="Huttenhower C."/>
            <person name="Geer L.Y."/>
            <person name="Coon J.J."/>
            <person name="Syka J.E.P."/>
            <person name="Bai D.L."/>
            <person name="Shabanowitz J."/>
            <person name="Burke D.J."/>
            <person name="Troyanskaya O.G."/>
            <person name="Hunt D.F."/>
        </authorList>
    </citation>
    <scope>PHOSPHORYLATION [LARGE SCALE ANALYSIS] AT SER-29; SER-62; THR-64 AND SER-1041</scope>
    <scope>IDENTIFICATION BY MASS SPECTROMETRY [LARGE SCALE ANALYSIS]</scope>
</reference>
<reference key="15">
    <citation type="journal article" date="2008" name="EMBO Rep.">
        <title>Blm10 binds to pre-activated proteasome core particles with open gate conformation.</title>
        <authorList>
            <person name="Lehmann A."/>
            <person name="Jechow K."/>
            <person name="Enenkel C."/>
        </authorList>
    </citation>
    <scope>FUNCTION</scope>
    <scope>INTERACTION WITH THE PROTEASOME</scope>
</reference>
<reference key="16">
    <citation type="journal article" date="2008" name="Mol. Cell. Proteomics">
        <title>A multidimensional chromatography technology for in-depth phosphoproteome analysis.</title>
        <authorList>
            <person name="Albuquerque C.P."/>
            <person name="Smolka M.B."/>
            <person name="Payne S.H."/>
            <person name="Bafna V."/>
            <person name="Eng J."/>
            <person name="Zhou H."/>
        </authorList>
    </citation>
    <scope>PHOSPHORYLATION [LARGE SCALE ANALYSIS] AT SER-11; SER-56 AND SER-62</scope>
    <scope>IDENTIFICATION BY MASS SPECTROMETRY [LARGE SCALE ANALYSIS]</scope>
</reference>
<reference key="17">
    <citation type="journal article" date="2009" name="Science">
        <title>Global analysis of Cdk1 substrate phosphorylation sites provides insights into evolution.</title>
        <authorList>
            <person name="Holt L.J."/>
            <person name="Tuch B.B."/>
            <person name="Villen J."/>
            <person name="Johnson A.D."/>
            <person name="Gygi S.P."/>
            <person name="Morgan D.O."/>
        </authorList>
    </citation>
    <scope>PHOSPHORYLATION [LARGE SCALE ANALYSIS] AT SER-62; THR-64; THR-66 AND SER-1041</scope>
    <scope>IDENTIFICATION BY MASS SPECTROMETRY [LARGE SCALE ANALYSIS]</scope>
</reference>
<reference key="18">
    <citation type="journal article" date="2011" name="J. Biol. Chem.">
        <title>Blm10 protein promotes proteasomal substrate turnover by an active gating mechanism.</title>
        <authorList>
            <person name="Dange T."/>
            <person name="Smith D."/>
            <person name="Noy T."/>
            <person name="Rommel P.C."/>
            <person name="Jurzitza L."/>
            <person name="Cordero R.J."/>
            <person name="Legendre A."/>
            <person name="Finley D."/>
            <person name="Goldberg A.L."/>
            <person name="Schmidt M."/>
        </authorList>
    </citation>
    <scope>FUNCTION</scope>
    <scope>MUTAGENESIS OF ARG-2139; SER-2140; TYR-2141; TYR-2142 AND ALA-2143</scope>
</reference>
<reference key="19">
    <citation type="journal article" date="2013" name="Cell">
        <title>Acetylation-mediated proteasomal degradation of core histones during DNA repair and spermatogenesis.</title>
        <authorList>
            <person name="Qian M.X."/>
            <person name="Pang Y."/>
            <person name="Liu C.H."/>
            <person name="Haratake K."/>
            <person name="Du B.Y."/>
            <person name="Ji D.Y."/>
            <person name="Wang G.F."/>
            <person name="Zhu Q.Q."/>
            <person name="Song W."/>
            <person name="Yu Y."/>
            <person name="Zhang X.X."/>
            <person name="Huang H.T."/>
            <person name="Miao S."/>
            <person name="Chen L.B."/>
            <person name="Zhang Z.H."/>
            <person name="Liang Y.N."/>
            <person name="Liu S."/>
            <person name="Cha H."/>
            <person name="Yang D."/>
            <person name="Zhai Y."/>
            <person name="Komatsu T."/>
            <person name="Tsuruta F."/>
            <person name="Li H."/>
            <person name="Cao C."/>
            <person name="Li W."/>
            <person name="Li G.H."/>
            <person name="Cheng Y."/>
            <person name="Chiba T."/>
            <person name="Wang L."/>
            <person name="Goldberg A.L."/>
            <person name="Shen Y."/>
            <person name="Qiu X.B."/>
        </authorList>
    </citation>
    <scope>FUNCTION</scope>
    <scope>MUTAGENESIS OF 1663-TYR-ASN-1664</scope>
</reference>
<reference key="20">
    <citation type="journal article" date="2006" name="J. Mol. Biol.">
        <title>Structure of the Blm10-20 S proteasome complex by cryo-electron microscopy. Insights into the mechanism of activation of mature yeast proteasomes.</title>
        <authorList>
            <person name="Iwanczyk J."/>
            <person name="Sadre-Bazzaz K."/>
            <person name="Ferrell K."/>
            <person name="Kondrashkina E."/>
            <person name="Formosa T."/>
            <person name="Hill C.P."/>
            <person name="Ortega J."/>
        </authorList>
    </citation>
    <scope>STRUCTURE OF THE PROTEASOME BY ELECTRON MICROSCOPY</scope>
</reference>
<reference key="21">
    <citation type="journal article" date="2010" name="Mol. Cell">
        <title>Structure of a Blm10 complex reveals common mechanisms for proteasome binding and gate opening.</title>
        <authorList>
            <person name="Sadre-Bazzaz K."/>
            <person name="Whitby F.G."/>
            <person name="Robinson H."/>
            <person name="Formosa T."/>
            <person name="Hill C.P."/>
        </authorList>
    </citation>
    <scope>X-RAY CRYSTALLOGRAPHY (3.0 ANGSTROMS) OF 79-2143 IN COMPLEX WITH THE PROTEASOME</scope>
    <scope>FUNCTION</scope>
    <scope>MUTAGENESIS OF 2141-TYR--ALA-2143</scope>
</reference>
<proteinExistence type="evidence at protein level"/>
<comment type="function">
    <text evidence="2 3 5 6 7 8 9">Associated component of the proteasome that specifically recognizes acetylated histones and promotes ATP- and ubiquitin-independent degradation of core histones during DNA damage response. Recognizes and binds acetylated histones via its bromodomain-like (BRDL) region and activates the proteasome by opening the gated channel for substrate entry. Binds to the core proteasome via its C-terminus, which occupies the same binding sites as the proteasomal ATPases, opening the closed structure of the proteasome via an active gating mechanism. Involved in DNA damage response in somatic cells: binds to acetylated histones and promotes degradation of histones following DNA double-strand breaks.</text>
</comment>
<comment type="subunit">
    <text evidence="3 5 7">According to PubMed:12973301, colocalizes with nascent proteasome. According to PubMed:15778719, associates with proteasome core particles and also forms a complex with regulatory particle-core particle (RP-CP).</text>
</comment>
<comment type="interaction">
    <interactant intactId="EBI-22761">
        <id>P43583</id>
    </interactant>
    <interactant intactId="EBI-7926">
        <id>P32835</id>
        <label>GSP1</label>
    </interactant>
    <organismsDiffer>false</organismsDiffer>
    <experiments>2</experiments>
</comment>
<comment type="interaction">
    <interactant intactId="EBI-22761">
        <id>P43583</id>
    </interactant>
    <interactant intactId="EBI-14001">
        <id>P30656</id>
        <label>PRE2</label>
    </interactant>
    <organismsDiffer>false</organismsDiffer>
    <experiments>4</experiments>
</comment>
<comment type="subcellular location">
    <subcellularLocation>
        <location>Nucleus</location>
    </subcellularLocation>
    <subcellularLocation>
        <location>Cytoplasm</location>
    </subcellularLocation>
</comment>
<comment type="domain">
    <text evidence="9">The bromodomain-like (BRDL) region specifically recognizes and binds acetylated histones.</text>
</comment>
<comment type="domain">
    <text evidence="8">The YYX motif is required for the association with the proteasome.</text>
</comment>
<comment type="miscellaneous">
    <text evidence="4">Present with 2600 molecules/cell in log phase SD medium.</text>
</comment>
<comment type="similarity">
    <text evidence="10">Belongs to the BLM10 family.</text>
</comment>
<comment type="sequence caution" evidence="10">
    <conflict type="frameshift">
        <sequence resource="EMBL-CDS" id="BAA09231"/>
    </conflict>
    <text>Produces 2 separate ORFs.</text>
</comment>
<comment type="sequence caution" evidence="10">
    <conflict type="frameshift">
        <sequence resource="EMBL-CDS" id="BAA09232"/>
    </conflict>
    <text>Produces 2 separate ORFs.</text>
</comment>
<comment type="sequence caution" evidence="10">
    <conflict type="frameshift" ref="6"/>
</comment>
<evidence type="ECO:0000256" key="1">
    <source>
        <dbReference type="SAM" id="MobiDB-lite"/>
    </source>
</evidence>
<evidence type="ECO:0000269" key="2">
    <source>
    </source>
</evidence>
<evidence type="ECO:0000269" key="3">
    <source>
    </source>
</evidence>
<evidence type="ECO:0000269" key="4">
    <source>
    </source>
</evidence>
<evidence type="ECO:0000269" key="5">
    <source>
    </source>
</evidence>
<evidence type="ECO:0000269" key="6">
    <source>
    </source>
</evidence>
<evidence type="ECO:0000269" key="7">
    <source>
    </source>
</evidence>
<evidence type="ECO:0000269" key="8">
    <source>
    </source>
</evidence>
<evidence type="ECO:0000269" key="9">
    <source>
    </source>
</evidence>
<evidence type="ECO:0000305" key="10"/>
<evidence type="ECO:0007744" key="11">
    <source>
    </source>
</evidence>
<evidence type="ECO:0007744" key="12">
    <source>
    </source>
</evidence>
<evidence type="ECO:0007744" key="13">
    <source>
    </source>
</evidence>
<evidence type="ECO:0007744" key="14">
    <source>
    </source>
</evidence>
<evidence type="ECO:0007829" key="15">
    <source>
        <dbReference type="PDB" id="9D0T"/>
    </source>
</evidence>
<evidence type="ECO:0007829" key="16">
    <source>
        <dbReference type="PDB" id="9GBK"/>
    </source>
</evidence>
<sequence length="2143" mass="245996">MTANNDDDIKSPIPITNKTLSQLKRFERSPGRPSSSQGEIKRKKSRLYAADGRPHSPLRARSATPTLQDQKLFNGMDSTSLLNERLQHYTLDYVSDRAQHMKNIYDPSSRWFSRSVRPEFPIEEFLPYKTESHEDQAKYLCHVLVNLYIAISSLDIQGLISISSKDLADLKKEVDDLALKTDLFRLSNNTAENDLLGNDIADYDDAEGLEDELDEYFDLAGPDFNATGKITAKSATIVNVNHWTNELKNCLHFDFPVALRKSLATVYYYLSLVQGQKVYRQMHVDMFERLVSLDDDRTNFTELLQKQGLLLDHQIMLNFLCEFLPYPDPDYARYELSSKEDLQLFRLLLKHAHNAKPFFDKSKESLLVDTMNFLLSSLAPSTMMAVMPIVTSVVPYHYHIHSKIIDYFPFCYSIWSSVSANVAIDTHMYDFVGSISKDVHNKILSSEHEKDVVGVEFGEFGIFTDDQMTFMFNRLQGHLRTDGQIHSYSRTVKPFVYAINGSKKDRFFEKLVSLAKAIETFIHPSNNGFWTKPNAKFVHAFIKSYHGRVKYEEDICARGVTNGICLTSFCHEEIVEIFLNIISLGSQNKNPDIANYYISCFAYLLELDPSNAYLIYDKILIDLYDTLADQFINSRHRIISSLKQFTRVIRFIVMDKLYRVHITNVLSMLVSKLDMNDTNLTSNLINGIVSIAAFIPIQDLTGEDDYISFESDTLPLVQQHFYHIKCGESSKTFRVDDELLNNAFKASTTVFQSMLKVYVEKIFQLVDVDLEDSLVTKINQTTMILQESMDDKIFNYFASLLQRNFWSNDSFKEKDPNYELVTIPLAALVRRNNGLSKELVRTLLFHIKEQIKRGAGSVRSTSEIQQRDVKLVLYLTALNDVLRQCHESLLEYSDELITFMKYLYDNVTNPPLDVITSIVIHSALATLCTTEITDCRLFPEDSKIPEKDRWGGLQFDPRRFDKQHLSFQWHVPSSDEITLSISILESLSEYCINNVEELMKAPRHDSEYGDMIQKYVLVMTHTLSGSSLLFDPDFNKYRTQSNLSYREKLILLKNIRENNCDPQELDIDIEQIRSGKDDEDYIESKDIEAGLNAGVSDVVQLRDEFPDELIVDEEVVSEMPSGVNTPIAGTHGTDNSAMSSDLAFRDLDIYTCNYYFGNTTEEKLQNPQYLQVHRVRARIGHFFHKLYVFLSTNFENNTNMFQILLHGLKVWFTDLGQETVFNEDPNAFIDVDFLENVQSLSHVNEPFTRTNFAIRANSLHQSRVLLHSTNRKASKLENLLLVDIIQLATSLYPDIYKPAQGTLVHCMKQLVGSYGVVINKIIPSLEKAIKDHDYMKIQVILNVLLIKKIHRKLMTDYKDIGRLIFLLIECCRVNELEIGMYADKILTDIVIGIKIPSSVCVISDQAFLPLAPPDGTINLQVEAVKLAKKKKREYYLSLLVDLQDKLLDKLDNEKDMGWKIRMFILRFVTQIQSNLESKPDKRAVFSIISQISTKHPEIIHLVVKSLLSTCNKIISLSDYEYDITRAYKNEFNPSFVEILDTSTTSFPKTFTEEMNNFDNPKYFIDLRAYVGWLCWGRLMYVMSPKALKLNLRENELEVLKTAGHLLTREFLRDVTMNLVQDNETRGVFSSGNVSFFSLVILLISSGFCELNMSDLFELCESYYNKDDKASMIMSVEIVAGLVCGSKFMSVSDLDKRDTFIENFLAKCLDYELNHDAFEIWSTLAWWLPAVVDLRRSKTFFCHFINADGMFDRESDAATHQTSKIYMLRSILMSMEFRAPDVGKLFDELVFDHPYDQVRQAVAKLLTTLVQNQSNPSISDPTTLLEAERNDPDGLGLPLKSVPEKVDAYIKKQFEIIKNLEDSVVGLNPQQFIKTDYFYRTSTIFYWIKEMARGPNKVLLVPYLVDYVLPFLIGLVKHKDVCALASLDPVRLYAGLGYMPIRKNHVAAIVDYVCSSNVALSSNQTKLQLAFIQHFLSAELLQLTEEEKNKILEFVVSNLYNEQFVEVRVRAASILSDIVHNWKEEQPLLSLIERFAKGLDVNKYTSKERQKLSKTDIKIHGNVLGLGAIISAFPYVFPLPPWIPKQLSNLSSWARTSGMTGQAAKNTISEFKKVRADTWKFDRASFNTEELEDLEGVLWRSYYA</sequence>
<organism>
    <name type="scientific">Saccharomyces cerevisiae (strain ATCC 204508 / S288c)</name>
    <name type="common">Baker's yeast</name>
    <dbReference type="NCBI Taxonomy" id="559292"/>
    <lineage>
        <taxon>Eukaryota</taxon>
        <taxon>Fungi</taxon>
        <taxon>Dikarya</taxon>
        <taxon>Ascomycota</taxon>
        <taxon>Saccharomycotina</taxon>
        <taxon>Saccharomycetes</taxon>
        <taxon>Saccharomycetales</taxon>
        <taxon>Saccharomycetaceae</taxon>
        <taxon>Saccharomyces</taxon>
    </lineage>
</organism>
<name>BLM10_YEAST</name>
<accession>P43583</accession>
<accession>D6VTM3</accession>
<accession>P43584</accession>
<feature type="chain" id="PRO_0000076182" description="Proteasome activator BLM10">
    <location>
        <begin position="1"/>
        <end position="2143"/>
    </location>
</feature>
<feature type="repeat" description="HEAT 1">
    <location>
        <begin position="1316"/>
        <end position="1355"/>
    </location>
</feature>
<feature type="repeat" description="HEAT 2">
    <location>
        <begin position="1779"/>
        <end position="1814"/>
    </location>
</feature>
<feature type="repeat" description="HEAT 3">
    <location>
        <begin position="1902"/>
        <end position="1941"/>
    </location>
</feature>
<feature type="repeat" description="HEAT 4">
    <location>
        <begin position="1985"/>
        <end position="2023"/>
    </location>
</feature>
<feature type="region of interest" description="Disordered" evidence="1">
    <location>
        <begin position="1"/>
        <end position="65"/>
    </location>
</feature>
<feature type="region of interest" description="Bromodomain-like (BRDL)">
    <location>
        <begin position="1648"/>
        <end position="1732"/>
    </location>
</feature>
<feature type="short sequence motif" description="YYX motif">
    <location>
        <begin position="2141"/>
        <end position="2143"/>
    </location>
</feature>
<feature type="modified residue" description="Phosphoserine" evidence="13">
    <location>
        <position position="11"/>
    </location>
</feature>
<feature type="modified residue" description="Phosphoserine" evidence="11">
    <location>
        <position position="29"/>
    </location>
</feature>
<feature type="modified residue" description="Phosphoserine" evidence="12 13">
    <location>
        <position position="56"/>
    </location>
</feature>
<feature type="modified residue" description="Phosphoserine" evidence="11 13 14">
    <location>
        <position position="62"/>
    </location>
</feature>
<feature type="modified residue" description="Phosphothreonine" evidence="11 14">
    <location>
        <position position="64"/>
    </location>
</feature>
<feature type="modified residue" description="Phosphothreonine" evidence="14">
    <location>
        <position position="66"/>
    </location>
</feature>
<feature type="modified residue" description="Phosphoserine" evidence="11 12 14">
    <location>
        <position position="1041"/>
    </location>
</feature>
<feature type="mutagenesis site" description="Abolishes binding to acetylated histones." evidence="9">
    <original>YN</original>
    <variation>HD</variation>
    <location>
        <begin position="1663"/>
        <end position="1664"/>
    </location>
</feature>
<feature type="mutagenesis site" description="Does not affect binding to the proteasome." evidence="8">
    <original>R</original>
    <variation>D</variation>
    <location>
        <position position="2139"/>
    </location>
</feature>
<feature type="mutagenesis site" description="Abolishes binding to the proteasome." evidence="8">
    <original>S</original>
    <variation>H</variation>
    <location>
        <position position="2140"/>
    </location>
</feature>
<feature type="mutagenesis site" description="Loss of function." evidence="7">
    <location>
        <begin position="2141"/>
        <end position="2143"/>
    </location>
</feature>
<feature type="mutagenesis site" description="Does not affect viability in the presence of cycloheximide." evidence="8">
    <original>Y</original>
    <variation>M</variation>
    <location>
        <position position="2141"/>
    </location>
</feature>
<feature type="mutagenesis site" description="Loss of function; abolishes binding to the proteasome." evidence="8">
    <original>Y</original>
    <variation>A</variation>
    <variation>V</variation>
    <location>
        <position position="2142"/>
    </location>
</feature>
<feature type="mutagenesis site" description="Abolishes binding to the proteasome." evidence="8">
    <original>Y</original>
    <variation>V</variation>
    <location>
        <position position="2142"/>
    </location>
</feature>
<feature type="mutagenesis site" description="Does not affect viability in the presence of cycloheximide." evidence="8">
    <original>A</original>
    <variation>S</variation>
    <location>
        <position position="2143"/>
    </location>
</feature>
<feature type="helix" evidence="16">
    <location>
        <begin position="82"/>
        <end position="88"/>
    </location>
</feature>
<feature type="helix" evidence="16">
    <location>
        <begin position="97"/>
        <end position="103"/>
    </location>
</feature>
<feature type="helix" evidence="15">
    <location>
        <begin position="122"/>
        <end position="125"/>
    </location>
</feature>
<feature type="strand" evidence="15">
    <location>
        <begin position="126"/>
        <end position="128"/>
    </location>
</feature>
<feature type="helix" evidence="16">
    <location>
        <begin position="133"/>
        <end position="152"/>
    </location>
</feature>
<feature type="helix" evidence="16">
    <location>
        <begin position="164"/>
        <end position="170"/>
    </location>
</feature>
<feature type="strand" evidence="15">
    <location>
        <begin position="223"/>
        <end position="225"/>
    </location>
</feature>
<feature type="helix" evidence="16">
    <location>
        <begin position="240"/>
        <end position="250"/>
    </location>
</feature>
<feature type="helix" evidence="16">
    <location>
        <begin position="251"/>
        <end position="253"/>
    </location>
</feature>
<feature type="helix" evidence="16">
    <location>
        <begin position="257"/>
        <end position="270"/>
    </location>
</feature>
<feature type="strand" evidence="15">
    <location>
        <begin position="274"/>
        <end position="276"/>
    </location>
</feature>
<feature type="helix" evidence="16">
    <location>
        <begin position="281"/>
        <end position="290"/>
    </location>
</feature>
<feature type="helix" evidence="16">
    <location>
        <begin position="300"/>
        <end position="307"/>
    </location>
</feature>
<feature type="helix" evidence="16">
    <location>
        <begin position="313"/>
        <end position="321"/>
    </location>
</feature>
<feature type="strand" evidence="16">
    <location>
        <begin position="327"/>
        <end position="331"/>
    </location>
</feature>
<feature type="strand" evidence="16">
    <location>
        <begin position="336"/>
        <end position="338"/>
    </location>
</feature>
<feature type="helix" evidence="16">
    <location>
        <begin position="339"/>
        <end position="355"/>
    </location>
</feature>
<feature type="helix" evidence="16">
    <location>
        <begin position="356"/>
        <end position="358"/>
    </location>
</feature>
<feature type="helix" evidence="16">
    <location>
        <begin position="366"/>
        <end position="377"/>
    </location>
</feature>
<feature type="turn" evidence="16">
    <location>
        <begin position="380"/>
        <end position="382"/>
    </location>
</feature>
<feature type="helix" evidence="16">
    <location>
        <begin position="383"/>
        <end position="393"/>
    </location>
</feature>
<feature type="helix" evidence="16">
    <location>
        <begin position="404"/>
        <end position="407"/>
    </location>
</feature>
<feature type="helix" evidence="16">
    <location>
        <begin position="408"/>
        <end position="415"/>
    </location>
</feature>
<feature type="helix" evidence="16">
    <location>
        <begin position="422"/>
        <end position="425"/>
    </location>
</feature>
<feature type="turn" evidence="16">
    <location>
        <begin position="426"/>
        <end position="428"/>
    </location>
</feature>
<feature type="helix" evidence="16">
    <location>
        <begin position="429"/>
        <end position="444"/>
    </location>
</feature>
<feature type="turn" evidence="16">
    <location>
        <begin position="445"/>
        <end position="448"/>
    </location>
</feature>
<feature type="strand" evidence="15">
    <location>
        <begin position="449"/>
        <end position="451"/>
    </location>
</feature>
<feature type="strand" evidence="16">
    <location>
        <begin position="458"/>
        <end position="463"/>
    </location>
</feature>
<feature type="helix" evidence="16">
    <location>
        <begin position="465"/>
        <end position="480"/>
    </location>
</feature>
<feature type="helix" evidence="16">
    <location>
        <begin position="488"/>
        <end position="496"/>
    </location>
</feature>
<feature type="strand" evidence="16">
    <location>
        <begin position="501"/>
        <end position="503"/>
    </location>
</feature>
<feature type="helix" evidence="16">
    <location>
        <begin position="505"/>
        <end position="522"/>
    </location>
</feature>
<feature type="helix" evidence="16">
    <location>
        <begin position="531"/>
        <end position="556"/>
    </location>
</feature>
<feature type="turn" evidence="15">
    <location>
        <begin position="557"/>
        <end position="559"/>
    </location>
</feature>
<feature type="strand" evidence="15">
    <location>
        <begin position="563"/>
        <end position="565"/>
    </location>
</feature>
<feature type="helix" evidence="16">
    <location>
        <begin position="568"/>
        <end position="578"/>
    </location>
</feature>
<feature type="turn" evidence="16">
    <location>
        <begin position="579"/>
        <end position="581"/>
    </location>
</feature>
<feature type="helix" evidence="16">
    <location>
        <begin position="582"/>
        <end position="586"/>
    </location>
</feature>
<feature type="helix" evidence="16">
    <location>
        <begin position="591"/>
        <end position="598"/>
    </location>
</feature>
<feature type="helix" evidence="16">
    <location>
        <begin position="600"/>
        <end position="606"/>
    </location>
</feature>
<feature type="helix" evidence="16">
    <location>
        <begin position="612"/>
        <end position="627"/>
    </location>
</feature>
<feature type="turn" evidence="16">
    <location>
        <begin position="628"/>
        <end position="633"/>
    </location>
</feature>
<feature type="helix" evidence="16">
    <location>
        <begin position="635"/>
        <end position="652"/>
    </location>
</feature>
<feature type="helix" evidence="16">
    <location>
        <begin position="656"/>
        <end position="659"/>
    </location>
</feature>
<feature type="helix" evidence="16">
    <location>
        <begin position="661"/>
        <end position="670"/>
    </location>
</feature>
<feature type="helix" evidence="16">
    <location>
        <begin position="678"/>
        <end position="693"/>
    </location>
</feature>
<feature type="helix" evidence="16">
    <location>
        <begin position="709"/>
        <end position="726"/>
    </location>
</feature>
<feature type="helix" evidence="16">
    <location>
        <begin position="730"/>
        <end position="732"/>
    </location>
</feature>
<feature type="helix" evidence="16">
    <location>
        <begin position="738"/>
        <end position="742"/>
    </location>
</feature>
<feature type="helix" evidence="16">
    <location>
        <begin position="744"/>
        <end position="747"/>
    </location>
</feature>
<feature type="helix" evidence="16">
    <location>
        <begin position="751"/>
        <end position="765"/>
    </location>
</feature>
<feature type="helix" evidence="16">
    <location>
        <begin position="772"/>
        <end position="787"/>
    </location>
</feature>
<feature type="helix" evidence="16">
    <location>
        <begin position="791"/>
        <end position="806"/>
    </location>
</feature>
<feature type="strand" evidence="16">
    <location>
        <begin position="813"/>
        <end position="815"/>
    </location>
</feature>
<feature type="helix" evidence="16">
    <location>
        <begin position="819"/>
        <end position="831"/>
    </location>
</feature>
<feature type="helix" evidence="16">
    <location>
        <begin position="833"/>
        <end position="835"/>
    </location>
</feature>
<feature type="helix" evidence="16">
    <location>
        <begin position="836"/>
        <end position="852"/>
    </location>
</feature>
<feature type="turn" evidence="15">
    <location>
        <begin position="853"/>
        <end position="856"/>
    </location>
</feature>
<feature type="strand" evidence="15">
    <location>
        <begin position="860"/>
        <end position="863"/>
    </location>
</feature>
<feature type="helix" evidence="15">
    <location>
        <begin position="866"/>
        <end position="868"/>
    </location>
</feature>
<feature type="helix" evidence="16">
    <location>
        <begin position="870"/>
        <end position="882"/>
    </location>
</feature>
<feature type="turn" evidence="16">
    <location>
        <begin position="885"/>
        <end position="888"/>
    </location>
</feature>
<feature type="helix" evidence="16">
    <location>
        <begin position="893"/>
        <end position="906"/>
    </location>
</feature>
<feature type="helix" evidence="16">
    <location>
        <begin position="910"/>
        <end position="916"/>
    </location>
</feature>
<feature type="helix" evidence="16">
    <location>
        <begin position="918"/>
        <end position="928"/>
    </location>
</feature>
<feature type="helix" evidence="15">
    <location>
        <begin position="939"/>
        <end position="941"/>
    </location>
</feature>
<feature type="turn" evidence="16">
    <location>
        <begin position="950"/>
        <end position="955"/>
    </location>
</feature>
<feature type="helix" evidence="16">
    <location>
        <begin position="957"/>
        <end position="960"/>
    </location>
</feature>
<feature type="turn" evidence="16">
    <location>
        <begin position="962"/>
        <end position="965"/>
    </location>
</feature>
<feature type="helix" evidence="16">
    <location>
        <begin position="974"/>
        <end position="1000"/>
    </location>
</feature>
<feature type="helix" evidence="16">
    <location>
        <begin position="1006"/>
        <end position="1025"/>
    </location>
</feature>
<feature type="helix" evidence="16">
    <location>
        <begin position="1027"/>
        <end position="1029"/>
    </location>
</feature>
<feature type="helix" evidence="15">
    <location>
        <begin position="1032"/>
        <end position="1036"/>
    </location>
</feature>
<feature type="helix" evidence="16">
    <location>
        <begin position="1161"/>
        <end position="1164"/>
    </location>
</feature>
<feature type="helix" evidence="16">
    <location>
        <begin position="1167"/>
        <end position="1193"/>
    </location>
</feature>
<feature type="helix" evidence="16">
    <location>
        <begin position="1199"/>
        <end position="1213"/>
    </location>
</feature>
<feature type="strand" evidence="16">
    <location>
        <begin position="1215"/>
        <end position="1217"/>
    </location>
</feature>
<feature type="strand" evidence="16">
    <location>
        <begin position="1220"/>
        <end position="1224"/>
    </location>
</feature>
<feature type="helix" evidence="16">
    <location>
        <begin position="1231"/>
        <end position="1237"/>
    </location>
</feature>
<feature type="helix" evidence="16">
    <location>
        <begin position="1249"/>
        <end position="1264"/>
    </location>
</feature>
<feature type="helix" evidence="16">
    <location>
        <begin position="1275"/>
        <end position="1288"/>
    </location>
</feature>
<feature type="helix" evidence="16">
    <location>
        <begin position="1293"/>
        <end position="1309"/>
    </location>
</feature>
<feature type="strand" evidence="16">
    <location>
        <begin position="1310"/>
        <end position="1312"/>
    </location>
</feature>
<feature type="helix" evidence="16">
    <location>
        <begin position="1313"/>
        <end position="1330"/>
    </location>
</feature>
<feature type="helix" evidence="16">
    <location>
        <begin position="1334"/>
        <end position="1344"/>
    </location>
</feature>
<feature type="helix" evidence="16">
    <location>
        <begin position="1347"/>
        <end position="1353"/>
    </location>
</feature>
<feature type="turn" evidence="16">
    <location>
        <begin position="1357"/>
        <end position="1359"/>
    </location>
</feature>
<feature type="helix" evidence="16">
    <location>
        <begin position="1360"/>
        <end position="1371"/>
    </location>
</feature>
<feature type="strand" evidence="15">
    <location>
        <begin position="1375"/>
        <end position="1377"/>
    </location>
</feature>
<feature type="helix" evidence="16">
    <location>
        <begin position="1378"/>
        <end position="1392"/>
    </location>
</feature>
<feature type="helix" evidence="16">
    <location>
        <begin position="1404"/>
        <end position="1406"/>
    </location>
</feature>
<feature type="helix" evidence="16">
    <location>
        <begin position="1408"/>
        <end position="1410"/>
    </location>
</feature>
<feature type="helix" evidence="16">
    <location>
        <begin position="1418"/>
        <end position="1452"/>
    </location>
</feature>
<feature type="helix" evidence="16">
    <location>
        <begin position="1458"/>
        <end position="1473"/>
    </location>
</feature>
<feature type="helix" evidence="16">
    <location>
        <begin position="1481"/>
        <end position="1488"/>
    </location>
</feature>
<feature type="helix" evidence="16">
    <location>
        <begin position="1489"/>
        <end position="1493"/>
    </location>
</feature>
<feature type="helix" evidence="16">
    <location>
        <begin position="1496"/>
        <end position="1518"/>
    </location>
</feature>
<feature type="turn" evidence="15">
    <location>
        <begin position="1519"/>
        <end position="1521"/>
    </location>
</feature>
<feature type="helix" evidence="16">
    <location>
        <begin position="1523"/>
        <end position="1526"/>
    </location>
</feature>
<feature type="strand" evidence="16">
    <location>
        <begin position="1536"/>
        <end position="1540"/>
    </location>
</feature>
<feature type="helix" evidence="16">
    <location>
        <begin position="1546"/>
        <end position="1554"/>
    </location>
</feature>
<feature type="strand" evidence="16">
    <location>
        <begin position="1572"/>
        <end position="1574"/>
    </location>
</feature>
<feature type="strand" evidence="16">
    <location>
        <begin position="1577"/>
        <end position="1582"/>
    </location>
</feature>
<feature type="helix" evidence="16">
    <location>
        <begin position="1593"/>
        <end position="1604"/>
    </location>
</feature>
<feature type="helix" evidence="16">
    <location>
        <begin position="1608"/>
        <end position="1620"/>
    </location>
</feature>
<feature type="turn" evidence="15">
    <location>
        <begin position="1622"/>
        <end position="1625"/>
    </location>
</feature>
<feature type="helix" evidence="16">
    <location>
        <begin position="1630"/>
        <end position="1644"/>
    </location>
</feature>
<feature type="helix" evidence="16">
    <location>
        <begin position="1654"/>
        <end position="1662"/>
    </location>
</feature>
<feature type="helix" evidence="16">
    <location>
        <begin position="1668"/>
        <end position="1683"/>
    </location>
</feature>
<feature type="turn" evidence="16">
    <location>
        <begin position="1684"/>
        <end position="1686"/>
    </location>
</feature>
<feature type="helix" evidence="16">
    <location>
        <begin position="1690"/>
        <end position="1707"/>
    </location>
</feature>
<feature type="strand" evidence="16">
    <location>
        <begin position="1708"/>
        <end position="1710"/>
    </location>
</feature>
<feature type="helix" evidence="16">
    <location>
        <begin position="1716"/>
        <end position="1726"/>
    </location>
</feature>
<feature type="helix" evidence="16">
    <location>
        <begin position="1727"/>
        <end position="1729"/>
    </location>
</feature>
<feature type="helix" evidence="16">
    <location>
        <begin position="1733"/>
        <end position="1735"/>
    </location>
</feature>
<feature type="helix" evidence="16">
    <location>
        <begin position="1739"/>
        <end position="1744"/>
    </location>
</feature>
<feature type="strand" evidence="15">
    <location>
        <begin position="1747"/>
        <end position="1749"/>
    </location>
</feature>
<feature type="strand" evidence="15">
    <location>
        <begin position="1752"/>
        <end position="1755"/>
    </location>
</feature>
<feature type="helix" evidence="16">
    <location>
        <begin position="1758"/>
        <end position="1773"/>
    </location>
</feature>
<feature type="strand" evidence="16">
    <location>
        <begin position="1774"/>
        <end position="1777"/>
    </location>
</feature>
<feature type="helix" evidence="16">
    <location>
        <begin position="1784"/>
        <end position="1787"/>
    </location>
</feature>
<feature type="helix" evidence="16">
    <location>
        <begin position="1795"/>
        <end position="1811"/>
    </location>
</feature>
<feature type="helix" evidence="16">
    <location>
        <begin position="1820"/>
        <end position="1827"/>
    </location>
</feature>
<feature type="strand" evidence="15">
    <location>
        <begin position="1830"/>
        <end position="1834"/>
    </location>
</feature>
<feature type="helix" evidence="16">
    <location>
        <begin position="1843"/>
        <end position="1858"/>
    </location>
</feature>
<feature type="helix" evidence="16">
    <location>
        <begin position="1859"/>
        <end position="1863"/>
    </location>
</feature>
<feature type="helix" evidence="16">
    <location>
        <begin position="1868"/>
        <end position="1871"/>
    </location>
</feature>
<feature type="helix" evidence="16">
    <location>
        <begin position="1875"/>
        <end position="1890"/>
    </location>
</feature>
<feature type="turn" evidence="16">
    <location>
        <begin position="1895"/>
        <end position="1899"/>
    </location>
</feature>
<feature type="helix" evidence="16">
    <location>
        <begin position="1900"/>
        <end position="1902"/>
    </location>
</feature>
<feature type="turn" evidence="16">
    <location>
        <begin position="1903"/>
        <end position="1906"/>
    </location>
</feature>
<feature type="helix" evidence="16">
    <location>
        <begin position="1907"/>
        <end position="1915"/>
    </location>
</feature>
<feature type="helix" evidence="16">
    <location>
        <begin position="1918"/>
        <end position="1924"/>
    </location>
</feature>
<feature type="helix" evidence="16">
    <location>
        <begin position="1928"/>
        <end position="1934"/>
    </location>
</feature>
<feature type="helix" evidence="16">
    <location>
        <begin position="1935"/>
        <end position="1937"/>
    </location>
</feature>
<feature type="helix" evidence="16">
    <location>
        <begin position="1942"/>
        <end position="1952"/>
    </location>
</feature>
<feature type="turn" evidence="15">
    <location>
        <begin position="1955"/>
        <end position="1958"/>
    </location>
</feature>
<feature type="helix" evidence="16">
    <location>
        <begin position="1961"/>
        <end position="1977"/>
    </location>
</feature>
<feature type="turn" evidence="16">
    <location>
        <begin position="1979"/>
        <end position="1981"/>
    </location>
</feature>
<feature type="helix" evidence="16">
    <location>
        <begin position="1984"/>
        <end position="1998"/>
    </location>
</feature>
<feature type="helix" evidence="16">
    <location>
        <begin position="2005"/>
        <end position="2019"/>
    </location>
</feature>
<feature type="helix" evidence="16">
    <location>
        <begin position="2024"/>
        <end position="2035"/>
    </location>
</feature>
<feature type="helix" evidence="16">
    <location>
        <begin position="2036"/>
        <end position="2038"/>
    </location>
</feature>
<feature type="strand" evidence="15">
    <location>
        <begin position="2041"/>
        <end position="2043"/>
    </location>
</feature>
<feature type="helix" evidence="16">
    <location>
        <begin position="2045"/>
        <end position="2054"/>
    </location>
</feature>
<feature type="helix" evidence="16">
    <location>
        <begin position="2056"/>
        <end position="2070"/>
    </location>
</feature>
<feature type="helix" evidence="16">
    <location>
        <begin position="2081"/>
        <end position="2093"/>
    </location>
</feature>
<feature type="helix" evidence="16">
    <location>
        <begin position="2098"/>
        <end position="2113"/>
    </location>
</feature>
<feature type="turn" evidence="15">
    <location>
        <begin position="2114"/>
        <end position="2117"/>
    </location>
</feature>
<feature type="helix" evidence="16">
    <location>
        <begin position="2118"/>
        <end position="2121"/>
    </location>
</feature>
<feature type="helix" evidence="16">
    <location>
        <begin position="2122"/>
        <end position="2124"/>
    </location>
</feature>
<feature type="helix" evidence="16">
    <location>
        <begin position="2127"/>
        <end position="2131"/>
    </location>
</feature>
<keyword id="KW-0002">3D-structure</keyword>
<keyword id="KW-0963">Cytoplasm</keyword>
<keyword id="KW-0903">Direct protein sequencing</keyword>
<keyword id="KW-0227">DNA damage</keyword>
<keyword id="KW-0234">DNA repair</keyword>
<keyword id="KW-0539">Nucleus</keyword>
<keyword id="KW-0597">Phosphoprotein</keyword>
<keyword id="KW-1185">Reference proteome</keyword>
<keyword id="KW-0677">Repeat</keyword>
<dbReference type="EMBL" id="D50617">
    <property type="protein sequence ID" value="BAA09231.1"/>
    <property type="status" value="ALT_FRAME"/>
    <property type="molecule type" value="Genomic_DNA"/>
</dbReference>
<dbReference type="EMBL" id="D50617">
    <property type="protein sequence ID" value="BAA09232.1"/>
    <property type="status" value="ALT_FRAME"/>
    <property type="molecule type" value="Genomic_DNA"/>
</dbReference>
<dbReference type="EMBL" id="AY693254">
    <property type="protein sequence ID" value="AAT93273.1"/>
    <property type="molecule type" value="Genomic_DNA"/>
</dbReference>
<dbReference type="EMBL" id="BK006940">
    <property type="protein sequence ID" value="DAA12433.1"/>
    <property type="molecule type" value="Genomic_DNA"/>
</dbReference>
<dbReference type="PIR" id="S56247">
    <property type="entry name" value="S56247"/>
</dbReference>
<dbReference type="PIR" id="S56248">
    <property type="entry name" value="S56248"/>
</dbReference>
<dbReference type="RefSeq" id="NP_116648.2">
    <property type="nucleotide sequence ID" value="NM_001179959.1"/>
</dbReference>
<dbReference type="PDB" id="4V7O">
    <property type="method" value="X-ray"/>
    <property type="resolution" value="3.00 A"/>
    <property type="chains" value="A5/A7/B4/B7=239-1037, A6/A8/B5/B8=1147-2143, AE/AF/B3/B6=79-154"/>
</dbReference>
<dbReference type="PDB" id="9D0T">
    <property type="method" value="EM"/>
    <property type="resolution" value="2.84 A"/>
    <property type="chains" value="O=1-2143"/>
</dbReference>
<dbReference type="PDB" id="9GBK">
    <property type="method" value="EM"/>
    <property type="resolution" value="2.39 A"/>
    <property type="chains" value="3=1-2143"/>
</dbReference>
<dbReference type="PDBsum" id="4V7O"/>
<dbReference type="PDBsum" id="9D0T"/>
<dbReference type="PDBsum" id="9GBK"/>
<dbReference type="EMDB" id="EMD-46461"/>
<dbReference type="EMDB" id="EMD-51221"/>
<dbReference type="SMR" id="P43583"/>
<dbReference type="BioGRID" id="31140">
    <property type="interactions" value="333"/>
</dbReference>
<dbReference type="DIP" id="DIP-6344N"/>
<dbReference type="FunCoup" id="P43583">
    <property type="interactions" value="413"/>
</dbReference>
<dbReference type="IntAct" id="P43583">
    <property type="interactions" value="39"/>
</dbReference>
<dbReference type="MINT" id="P43583"/>
<dbReference type="STRING" id="4932.YFL007W"/>
<dbReference type="CarbonylDB" id="P43583"/>
<dbReference type="iPTMnet" id="P43583"/>
<dbReference type="PaxDb" id="4932-YFL007W"/>
<dbReference type="PeptideAtlas" id="P43583"/>
<dbReference type="EnsemblFungi" id="YFL007W_mRNA">
    <property type="protein sequence ID" value="YFL007W"/>
    <property type="gene ID" value="YFL007W"/>
</dbReference>
<dbReference type="GeneID" id="850541"/>
<dbReference type="KEGG" id="sce:YFL007W"/>
<dbReference type="AGR" id="SGD:S000001887"/>
<dbReference type="SGD" id="S000001887">
    <property type="gene designation" value="BLM10"/>
</dbReference>
<dbReference type="VEuPathDB" id="FungiDB:YFL007W"/>
<dbReference type="eggNOG" id="KOG1851">
    <property type="taxonomic scope" value="Eukaryota"/>
</dbReference>
<dbReference type="GeneTree" id="ENSGT00390000011433"/>
<dbReference type="HOGENOM" id="CLU_000772_0_0_1"/>
<dbReference type="InParanoid" id="P43583"/>
<dbReference type="OMA" id="ECTQLVP"/>
<dbReference type="OrthoDB" id="17907at2759"/>
<dbReference type="BioCyc" id="YEAST:G3O-30449-MONOMER"/>
<dbReference type="BioGRID-ORCS" id="850541">
    <property type="hits" value="2 hits in 10 CRISPR screens"/>
</dbReference>
<dbReference type="CD-CODE" id="E03F929F">
    <property type="entry name" value="Stress granule"/>
</dbReference>
<dbReference type="PRO" id="PR:P43583"/>
<dbReference type="Proteomes" id="UP000002311">
    <property type="component" value="Chromosome VI"/>
</dbReference>
<dbReference type="RNAct" id="P43583">
    <property type="molecule type" value="protein"/>
</dbReference>
<dbReference type="GO" id="GO:0005829">
    <property type="term" value="C:cytosol"/>
    <property type="evidence" value="ECO:0000318"/>
    <property type="project" value="GO_Central"/>
</dbReference>
<dbReference type="GO" id="GO:0005634">
    <property type="term" value="C:nucleus"/>
    <property type="evidence" value="ECO:0000314"/>
    <property type="project" value="SGD"/>
</dbReference>
<dbReference type="GO" id="GO:0034515">
    <property type="term" value="C:proteasome storage granule"/>
    <property type="evidence" value="ECO:0000314"/>
    <property type="project" value="SGD"/>
</dbReference>
<dbReference type="GO" id="GO:0070577">
    <property type="term" value="F:lysine-acetylated histone binding"/>
    <property type="evidence" value="ECO:0000318"/>
    <property type="project" value="GO_Central"/>
</dbReference>
<dbReference type="GO" id="GO:0016504">
    <property type="term" value="F:peptidase activator activity"/>
    <property type="evidence" value="ECO:0000314"/>
    <property type="project" value="UniProtKB"/>
</dbReference>
<dbReference type="GO" id="GO:0070628">
    <property type="term" value="F:proteasome binding"/>
    <property type="evidence" value="ECO:0000314"/>
    <property type="project" value="SGD"/>
</dbReference>
<dbReference type="GO" id="GO:0006974">
    <property type="term" value="P:DNA damage response"/>
    <property type="evidence" value="ECO:0000314"/>
    <property type="project" value="UniProtKB"/>
</dbReference>
<dbReference type="GO" id="GO:0006281">
    <property type="term" value="P:DNA repair"/>
    <property type="evidence" value="ECO:0000314"/>
    <property type="project" value="UniProtKB"/>
</dbReference>
<dbReference type="GO" id="GO:0010499">
    <property type="term" value="P:proteasomal ubiquitin-independent protein catabolic process"/>
    <property type="evidence" value="ECO:0000314"/>
    <property type="project" value="UniProtKB"/>
</dbReference>
<dbReference type="GO" id="GO:0043248">
    <property type="term" value="P:proteasome assembly"/>
    <property type="evidence" value="ECO:0000315"/>
    <property type="project" value="SGD"/>
</dbReference>
<dbReference type="GO" id="GO:1990236">
    <property type="term" value="P:proteasome core complex import into nucleus"/>
    <property type="evidence" value="ECO:0000315"/>
    <property type="project" value="SGD"/>
</dbReference>
<dbReference type="GO" id="GO:1902906">
    <property type="term" value="P:proteasome storage granule assembly"/>
    <property type="evidence" value="ECO:0000315"/>
    <property type="project" value="SGD"/>
</dbReference>
<dbReference type="GO" id="GO:0061136">
    <property type="term" value="P:regulation of proteasomal protein catabolic process"/>
    <property type="evidence" value="ECO:0000314"/>
    <property type="project" value="SGD"/>
</dbReference>
<dbReference type="FunFam" id="1.10.287.2210:FF:000001">
    <property type="entry name" value="BLM10p Proteasome activator"/>
    <property type="match status" value="1"/>
</dbReference>
<dbReference type="Gene3D" id="1.10.287.2210">
    <property type="match status" value="1"/>
</dbReference>
<dbReference type="InterPro" id="IPR016024">
    <property type="entry name" value="ARM-type_fold"/>
</dbReference>
<dbReference type="InterPro" id="IPR032430">
    <property type="entry name" value="Blm10_mid"/>
</dbReference>
<dbReference type="InterPro" id="IPR032372">
    <property type="entry name" value="Blm10_N"/>
</dbReference>
<dbReference type="InterPro" id="IPR055455">
    <property type="entry name" value="HEAT_PSME4"/>
</dbReference>
<dbReference type="InterPro" id="IPR035309">
    <property type="entry name" value="PSME4"/>
</dbReference>
<dbReference type="InterPro" id="IPR021843">
    <property type="entry name" value="PSME4_C"/>
</dbReference>
<dbReference type="PANTHER" id="PTHR32170">
    <property type="entry name" value="PROTEASOME ACTIVATOR COMPLEX SUBUNIT 4"/>
    <property type="match status" value="1"/>
</dbReference>
<dbReference type="PANTHER" id="PTHR32170:SF3">
    <property type="entry name" value="PROTEASOME ACTIVATOR COMPLEX SUBUNIT 4"/>
    <property type="match status" value="1"/>
</dbReference>
<dbReference type="Pfam" id="PF16547">
    <property type="entry name" value="BLM10_N"/>
    <property type="match status" value="1"/>
</dbReference>
<dbReference type="Pfam" id="PF23096">
    <property type="entry name" value="HEAT_PSME4"/>
    <property type="match status" value="1"/>
</dbReference>
<dbReference type="Pfam" id="PF16507">
    <property type="entry name" value="HEAT_PSME4_mid"/>
    <property type="match status" value="1"/>
</dbReference>
<dbReference type="Pfam" id="PF11919">
    <property type="entry name" value="PSME4_C"/>
    <property type="match status" value="1"/>
</dbReference>
<dbReference type="SUPFAM" id="SSF48371">
    <property type="entry name" value="ARM repeat"/>
    <property type="match status" value="2"/>
</dbReference>
<gene>
    <name type="primary">BLM10</name>
    <name type="synonym">BLM3</name>
    <name type="ordered locus">YFL007W</name>
    <name type="ORF">YFL006W</name>
</gene>
<protein>
    <recommendedName>
        <fullName>Proteasome activator BLM10</fullName>
    </recommendedName>
    <alternativeName>
        <fullName>Bleomycin resistance protein BLM10</fullName>
    </alternativeName>
</protein>